<dbReference type="EC" id="4.2.1.10" evidence="1"/>
<dbReference type="EMBL" id="CU468135">
    <property type="protein sequence ID" value="CAO95325.1"/>
    <property type="molecule type" value="Genomic_DNA"/>
</dbReference>
<dbReference type="RefSeq" id="WP_012440044.1">
    <property type="nucleotide sequence ID" value="NC_010694.1"/>
</dbReference>
<dbReference type="SMR" id="B2VGX5"/>
<dbReference type="STRING" id="465817.ETA_02790"/>
<dbReference type="KEGG" id="eta:ETA_02790"/>
<dbReference type="eggNOG" id="COG0757">
    <property type="taxonomic scope" value="Bacteria"/>
</dbReference>
<dbReference type="HOGENOM" id="CLU_090968_1_0_6"/>
<dbReference type="OrthoDB" id="9790793at2"/>
<dbReference type="UniPathway" id="UPA00053">
    <property type="reaction ID" value="UER00086"/>
</dbReference>
<dbReference type="Proteomes" id="UP000001726">
    <property type="component" value="Chromosome"/>
</dbReference>
<dbReference type="GO" id="GO:0003855">
    <property type="term" value="F:3-dehydroquinate dehydratase activity"/>
    <property type="evidence" value="ECO:0007669"/>
    <property type="project" value="UniProtKB-UniRule"/>
</dbReference>
<dbReference type="GO" id="GO:0008652">
    <property type="term" value="P:amino acid biosynthetic process"/>
    <property type="evidence" value="ECO:0007669"/>
    <property type="project" value="UniProtKB-KW"/>
</dbReference>
<dbReference type="GO" id="GO:0009073">
    <property type="term" value="P:aromatic amino acid family biosynthetic process"/>
    <property type="evidence" value="ECO:0007669"/>
    <property type="project" value="UniProtKB-KW"/>
</dbReference>
<dbReference type="GO" id="GO:0009423">
    <property type="term" value="P:chorismate biosynthetic process"/>
    <property type="evidence" value="ECO:0007669"/>
    <property type="project" value="UniProtKB-UniRule"/>
</dbReference>
<dbReference type="GO" id="GO:0019631">
    <property type="term" value="P:quinate catabolic process"/>
    <property type="evidence" value="ECO:0007669"/>
    <property type="project" value="TreeGrafter"/>
</dbReference>
<dbReference type="CDD" id="cd00466">
    <property type="entry name" value="DHQase_II"/>
    <property type="match status" value="1"/>
</dbReference>
<dbReference type="Gene3D" id="3.40.50.9100">
    <property type="entry name" value="Dehydroquinase, class II"/>
    <property type="match status" value="1"/>
</dbReference>
<dbReference type="HAMAP" id="MF_00169">
    <property type="entry name" value="AroQ"/>
    <property type="match status" value="1"/>
</dbReference>
<dbReference type="InterPro" id="IPR001874">
    <property type="entry name" value="DHquinase_II"/>
</dbReference>
<dbReference type="InterPro" id="IPR018509">
    <property type="entry name" value="DHquinase_II_CS"/>
</dbReference>
<dbReference type="InterPro" id="IPR036441">
    <property type="entry name" value="DHquinase_II_sf"/>
</dbReference>
<dbReference type="NCBIfam" id="TIGR01088">
    <property type="entry name" value="aroQ"/>
    <property type="match status" value="1"/>
</dbReference>
<dbReference type="NCBIfam" id="NF003804">
    <property type="entry name" value="PRK05395.1-1"/>
    <property type="match status" value="1"/>
</dbReference>
<dbReference type="NCBIfam" id="NF003805">
    <property type="entry name" value="PRK05395.1-2"/>
    <property type="match status" value="1"/>
</dbReference>
<dbReference type="NCBIfam" id="NF003806">
    <property type="entry name" value="PRK05395.1-3"/>
    <property type="match status" value="1"/>
</dbReference>
<dbReference type="NCBIfam" id="NF003807">
    <property type="entry name" value="PRK05395.1-4"/>
    <property type="match status" value="1"/>
</dbReference>
<dbReference type="PANTHER" id="PTHR21272">
    <property type="entry name" value="CATABOLIC 3-DEHYDROQUINASE"/>
    <property type="match status" value="1"/>
</dbReference>
<dbReference type="PANTHER" id="PTHR21272:SF3">
    <property type="entry name" value="CATABOLIC 3-DEHYDROQUINASE"/>
    <property type="match status" value="1"/>
</dbReference>
<dbReference type="Pfam" id="PF01220">
    <property type="entry name" value="DHquinase_II"/>
    <property type="match status" value="1"/>
</dbReference>
<dbReference type="PIRSF" id="PIRSF001399">
    <property type="entry name" value="DHquinase_II"/>
    <property type="match status" value="1"/>
</dbReference>
<dbReference type="SUPFAM" id="SSF52304">
    <property type="entry name" value="Type II 3-dehydroquinate dehydratase"/>
    <property type="match status" value="1"/>
</dbReference>
<dbReference type="PROSITE" id="PS01029">
    <property type="entry name" value="DEHYDROQUINASE_II"/>
    <property type="match status" value="1"/>
</dbReference>
<comment type="function">
    <text evidence="1">Catalyzes a trans-dehydration via an enolate intermediate.</text>
</comment>
<comment type="catalytic activity">
    <reaction evidence="1">
        <text>3-dehydroquinate = 3-dehydroshikimate + H2O</text>
        <dbReference type="Rhea" id="RHEA:21096"/>
        <dbReference type="ChEBI" id="CHEBI:15377"/>
        <dbReference type="ChEBI" id="CHEBI:16630"/>
        <dbReference type="ChEBI" id="CHEBI:32364"/>
        <dbReference type="EC" id="4.2.1.10"/>
    </reaction>
</comment>
<comment type="pathway">
    <text evidence="1">Metabolic intermediate biosynthesis; chorismate biosynthesis; chorismate from D-erythrose 4-phosphate and phosphoenolpyruvate: step 3/7.</text>
</comment>
<comment type="subunit">
    <text evidence="1">Homododecamer.</text>
</comment>
<comment type="similarity">
    <text evidence="1">Belongs to the type-II 3-dehydroquinase family.</text>
</comment>
<proteinExistence type="inferred from homology"/>
<organism>
    <name type="scientific">Erwinia tasmaniensis (strain DSM 17950 / CFBP 7177 / CIP 109463 / NCPPB 4357 / Et1/99)</name>
    <dbReference type="NCBI Taxonomy" id="465817"/>
    <lineage>
        <taxon>Bacteria</taxon>
        <taxon>Pseudomonadati</taxon>
        <taxon>Pseudomonadota</taxon>
        <taxon>Gammaproteobacteria</taxon>
        <taxon>Enterobacterales</taxon>
        <taxon>Erwiniaceae</taxon>
        <taxon>Erwinia</taxon>
    </lineage>
</organism>
<evidence type="ECO:0000255" key="1">
    <source>
        <dbReference type="HAMAP-Rule" id="MF_00169"/>
    </source>
</evidence>
<keyword id="KW-0028">Amino-acid biosynthesis</keyword>
<keyword id="KW-0057">Aromatic amino acid biosynthesis</keyword>
<keyword id="KW-0456">Lyase</keyword>
<keyword id="KW-1185">Reference proteome</keyword>
<sequence>MSDKLHVLLLNGPNLNLLGTREPEKYGHTSLDEIVSELTLQASALGVTLSHLQSNAEHALIDRIHQAKGNVDYIVINPAAFTHTSVALRDALLAVSIPFIEVHLSNVHAREPFRHHSYLSDISTGVICGLGVDGYSWALQTAVKRLSLSH</sequence>
<feature type="chain" id="PRO_1000097599" description="3-dehydroquinate dehydratase">
    <location>
        <begin position="1"/>
        <end position="150"/>
    </location>
</feature>
<feature type="active site" description="Proton acceptor" evidence="1">
    <location>
        <position position="26"/>
    </location>
</feature>
<feature type="active site" description="Proton donor" evidence="1">
    <location>
        <position position="103"/>
    </location>
</feature>
<feature type="binding site" evidence="1">
    <location>
        <position position="77"/>
    </location>
    <ligand>
        <name>substrate</name>
    </ligand>
</feature>
<feature type="binding site" evidence="1">
    <location>
        <position position="83"/>
    </location>
    <ligand>
        <name>substrate</name>
    </ligand>
</feature>
<feature type="binding site" evidence="1">
    <location>
        <position position="90"/>
    </location>
    <ligand>
        <name>substrate</name>
    </ligand>
</feature>
<feature type="binding site" evidence="1">
    <location>
        <begin position="104"/>
        <end position="105"/>
    </location>
    <ligand>
        <name>substrate</name>
    </ligand>
</feature>
<feature type="binding site" evidence="1">
    <location>
        <position position="114"/>
    </location>
    <ligand>
        <name>substrate</name>
    </ligand>
</feature>
<feature type="site" description="Transition state stabilizer" evidence="1">
    <location>
        <position position="21"/>
    </location>
</feature>
<gene>
    <name evidence="1" type="primary">aroQ</name>
    <name type="ordered locus">ETA_02790</name>
</gene>
<protein>
    <recommendedName>
        <fullName evidence="1">3-dehydroquinate dehydratase</fullName>
        <shortName evidence="1">3-dehydroquinase</shortName>
        <ecNumber evidence="1">4.2.1.10</ecNumber>
    </recommendedName>
    <alternativeName>
        <fullName evidence="1">Type II DHQase</fullName>
    </alternativeName>
</protein>
<name>AROQ_ERWT9</name>
<accession>B2VGX5</accession>
<reference key="1">
    <citation type="journal article" date="2008" name="Environ. Microbiol.">
        <title>The genome of Erwinia tasmaniensis strain Et1/99, a non-pathogenic bacterium in the genus Erwinia.</title>
        <authorList>
            <person name="Kube M."/>
            <person name="Migdoll A.M."/>
            <person name="Mueller I."/>
            <person name="Kuhl H."/>
            <person name="Beck A."/>
            <person name="Reinhardt R."/>
            <person name="Geider K."/>
        </authorList>
    </citation>
    <scope>NUCLEOTIDE SEQUENCE [LARGE SCALE GENOMIC DNA]</scope>
    <source>
        <strain>DSM 17950 / CFBP 7177 / CIP 109463 / NCPPB 4357 / Et1/99</strain>
    </source>
</reference>